<accession>B8HUR2</accession>
<reference key="1">
    <citation type="journal article" date="2011" name="MBio">
        <title>Novel metabolic attributes of the genus Cyanothece, comprising a group of unicellular nitrogen-fixing Cyanobacteria.</title>
        <authorList>
            <person name="Bandyopadhyay A."/>
            <person name="Elvitigala T."/>
            <person name="Welsh E."/>
            <person name="Stockel J."/>
            <person name="Liberton M."/>
            <person name="Min H."/>
            <person name="Sherman L.A."/>
            <person name="Pakrasi H.B."/>
        </authorList>
    </citation>
    <scope>NUCLEOTIDE SEQUENCE [LARGE SCALE GENOMIC DNA]</scope>
    <source>
        <strain>PCC 7425 / ATCC 29141</strain>
    </source>
</reference>
<feature type="chain" id="PRO_1000203852" description="Methionyl-tRNA formyltransferase">
    <location>
        <begin position="1"/>
        <end position="334"/>
    </location>
</feature>
<feature type="binding site" evidence="1">
    <location>
        <begin position="111"/>
        <end position="114"/>
    </location>
    <ligand>
        <name>(6S)-5,6,7,8-tetrahydrofolate</name>
        <dbReference type="ChEBI" id="CHEBI:57453"/>
    </ligand>
</feature>
<evidence type="ECO:0000255" key="1">
    <source>
        <dbReference type="HAMAP-Rule" id="MF_00182"/>
    </source>
</evidence>
<dbReference type="EC" id="2.1.2.9" evidence="1"/>
<dbReference type="EMBL" id="CP001344">
    <property type="protein sequence ID" value="ACL46264.1"/>
    <property type="molecule type" value="Genomic_DNA"/>
</dbReference>
<dbReference type="SMR" id="B8HUR2"/>
<dbReference type="STRING" id="395961.Cyan7425_3948"/>
<dbReference type="KEGG" id="cyn:Cyan7425_3948"/>
<dbReference type="eggNOG" id="COG0223">
    <property type="taxonomic scope" value="Bacteria"/>
</dbReference>
<dbReference type="HOGENOM" id="CLU_033347_1_1_3"/>
<dbReference type="OrthoDB" id="9802815at2"/>
<dbReference type="GO" id="GO:0005829">
    <property type="term" value="C:cytosol"/>
    <property type="evidence" value="ECO:0007669"/>
    <property type="project" value="TreeGrafter"/>
</dbReference>
<dbReference type="GO" id="GO:0004479">
    <property type="term" value="F:methionyl-tRNA formyltransferase activity"/>
    <property type="evidence" value="ECO:0007669"/>
    <property type="project" value="UniProtKB-UniRule"/>
</dbReference>
<dbReference type="CDD" id="cd08646">
    <property type="entry name" value="FMT_core_Met-tRNA-FMT_N"/>
    <property type="match status" value="1"/>
</dbReference>
<dbReference type="CDD" id="cd08704">
    <property type="entry name" value="Met_tRNA_FMT_C"/>
    <property type="match status" value="1"/>
</dbReference>
<dbReference type="FunFam" id="3.40.50.12230:FF:000001">
    <property type="entry name" value="Methionyl-tRNA formyltransferase"/>
    <property type="match status" value="1"/>
</dbReference>
<dbReference type="Gene3D" id="3.40.50.12230">
    <property type="match status" value="1"/>
</dbReference>
<dbReference type="HAMAP" id="MF_00182">
    <property type="entry name" value="Formyl_trans"/>
    <property type="match status" value="1"/>
</dbReference>
<dbReference type="InterPro" id="IPR005794">
    <property type="entry name" value="Fmt"/>
</dbReference>
<dbReference type="InterPro" id="IPR005793">
    <property type="entry name" value="Formyl_trans_C"/>
</dbReference>
<dbReference type="InterPro" id="IPR002376">
    <property type="entry name" value="Formyl_transf_N"/>
</dbReference>
<dbReference type="InterPro" id="IPR036477">
    <property type="entry name" value="Formyl_transf_N_sf"/>
</dbReference>
<dbReference type="InterPro" id="IPR011034">
    <property type="entry name" value="Formyl_transferase-like_C_sf"/>
</dbReference>
<dbReference type="InterPro" id="IPR001555">
    <property type="entry name" value="GART_AS"/>
</dbReference>
<dbReference type="InterPro" id="IPR044135">
    <property type="entry name" value="Met-tRNA-FMT_C"/>
</dbReference>
<dbReference type="InterPro" id="IPR041711">
    <property type="entry name" value="Met-tRNA-FMT_N"/>
</dbReference>
<dbReference type="NCBIfam" id="TIGR00460">
    <property type="entry name" value="fmt"/>
    <property type="match status" value="1"/>
</dbReference>
<dbReference type="PANTHER" id="PTHR11138">
    <property type="entry name" value="METHIONYL-TRNA FORMYLTRANSFERASE"/>
    <property type="match status" value="1"/>
</dbReference>
<dbReference type="PANTHER" id="PTHR11138:SF5">
    <property type="entry name" value="METHIONYL-TRNA FORMYLTRANSFERASE, MITOCHONDRIAL"/>
    <property type="match status" value="1"/>
</dbReference>
<dbReference type="Pfam" id="PF02911">
    <property type="entry name" value="Formyl_trans_C"/>
    <property type="match status" value="1"/>
</dbReference>
<dbReference type="Pfam" id="PF00551">
    <property type="entry name" value="Formyl_trans_N"/>
    <property type="match status" value="1"/>
</dbReference>
<dbReference type="SUPFAM" id="SSF50486">
    <property type="entry name" value="FMT C-terminal domain-like"/>
    <property type="match status" value="1"/>
</dbReference>
<dbReference type="SUPFAM" id="SSF53328">
    <property type="entry name" value="Formyltransferase"/>
    <property type="match status" value="1"/>
</dbReference>
<dbReference type="PROSITE" id="PS00373">
    <property type="entry name" value="GART"/>
    <property type="match status" value="1"/>
</dbReference>
<name>FMT_CYAP4</name>
<proteinExistence type="inferred from homology"/>
<gene>
    <name evidence="1" type="primary">fmt</name>
    <name type="ordered locus">Cyan7425_3948</name>
</gene>
<sequence>MKIVFWGTPSFAVPSLERLLREPDCEVLGVVTQPDKRRGRGNQLQPEAVKKVALAHNLPLWQPQRVKKDAATLADLRSLAADFFVVVAYGQILSPEILAMPRLGCINNHASLLPRYRGAAPIQWSLYNGETETGITTMLMDAGMDTGAMLLQRTLVVGLLENAEQVSQRLAELGADLVVETLRQQVVGQLQPIPQDNSQATYAPLIKKEDYGLDWHKSAIALQNQIRGFYPDCQTSLRGQPLKVSATLPLGSAYWSALPPEFQALAPQWTDERFAENHPPGSVIGLAKNLGPIIQTGAGGLLLLQVQPAGKRIQSGWDFVNGARLQIGEQLGLT</sequence>
<keyword id="KW-0648">Protein biosynthesis</keyword>
<keyword id="KW-0808">Transferase</keyword>
<comment type="function">
    <text evidence="1">Attaches a formyl group to the free amino group of methionyl-tRNA(fMet). The formyl group appears to play a dual role in the initiator identity of N-formylmethionyl-tRNA by promoting its recognition by IF2 and preventing the misappropriation of this tRNA by the elongation apparatus.</text>
</comment>
<comment type="catalytic activity">
    <reaction evidence="1">
        <text>L-methionyl-tRNA(fMet) + (6R)-10-formyltetrahydrofolate = N-formyl-L-methionyl-tRNA(fMet) + (6S)-5,6,7,8-tetrahydrofolate + H(+)</text>
        <dbReference type="Rhea" id="RHEA:24380"/>
        <dbReference type="Rhea" id="RHEA-COMP:9952"/>
        <dbReference type="Rhea" id="RHEA-COMP:9953"/>
        <dbReference type="ChEBI" id="CHEBI:15378"/>
        <dbReference type="ChEBI" id="CHEBI:57453"/>
        <dbReference type="ChEBI" id="CHEBI:78530"/>
        <dbReference type="ChEBI" id="CHEBI:78844"/>
        <dbReference type="ChEBI" id="CHEBI:195366"/>
        <dbReference type="EC" id="2.1.2.9"/>
    </reaction>
</comment>
<comment type="similarity">
    <text evidence="1">Belongs to the Fmt family.</text>
</comment>
<organism>
    <name type="scientific">Cyanothece sp. (strain PCC 7425 / ATCC 29141)</name>
    <dbReference type="NCBI Taxonomy" id="395961"/>
    <lineage>
        <taxon>Bacteria</taxon>
        <taxon>Bacillati</taxon>
        <taxon>Cyanobacteriota</taxon>
        <taxon>Cyanophyceae</taxon>
        <taxon>Gomontiellales</taxon>
        <taxon>Cyanothecaceae</taxon>
        <taxon>Cyanothece</taxon>
    </lineage>
</organism>
<protein>
    <recommendedName>
        <fullName evidence="1">Methionyl-tRNA formyltransferase</fullName>
        <ecNumber evidence="1">2.1.2.9</ecNumber>
    </recommendedName>
</protein>